<proteinExistence type="evidence at transcript level"/>
<organism>
    <name type="scientific">Oryza sativa subsp. japonica</name>
    <name type="common">Rice</name>
    <dbReference type="NCBI Taxonomy" id="39947"/>
    <lineage>
        <taxon>Eukaryota</taxon>
        <taxon>Viridiplantae</taxon>
        <taxon>Streptophyta</taxon>
        <taxon>Embryophyta</taxon>
        <taxon>Tracheophyta</taxon>
        <taxon>Spermatophyta</taxon>
        <taxon>Magnoliopsida</taxon>
        <taxon>Liliopsida</taxon>
        <taxon>Poales</taxon>
        <taxon>Poaceae</taxon>
        <taxon>BOP clade</taxon>
        <taxon>Oryzoideae</taxon>
        <taxon>Oryzeae</taxon>
        <taxon>Oryzinae</taxon>
        <taxon>Oryza</taxon>
        <taxon>Oryza sativa</taxon>
    </lineage>
</organism>
<comment type="induction">
    <text evidence="3">Induced by UV-C.</text>
</comment>
<comment type="similarity">
    <text evidence="4">Belongs to the class I-like SAM-binding methyltransferase superfamily. Cation-independent O-methyltransferase family. COMT subfamily.</text>
</comment>
<sequence>MAGQAPNMLAPPTDDELLHAQADLWRHSLYFVTSMAFQCAVKLGIPTAIHRAGGTASLPDLVAALSLPPAKLPFLRRLMRLLVHSGVFAAADDTTGSAGTYRLTPLSWLLVEGEGGAPVVDGHPCQVPVVLAGTSRHFVEAAMGLAEWFRKDVPAAAPPSPFEEVHGAVLFDESMASLHPEVDTVFNQALAAYDHSGFATVLRECSEVFQGVQSLTDCRGGDGAAAKAIVEAFPHIKCTVLDFPRVIGNKRGDGVVNYVAGDMFRAIPPAQAVMLKLVLHHWSDEDCVKILTQCKKAIPARKDGGKVIIIDIVIGAPSGPLLEAQLLMDVGMMVATKGRQRDENDWRDLFKKAGFNNYKIVKKLRARAVFEVYP</sequence>
<gene>
    <name evidence="6" type="ordered locus">Os11g0303600</name>
    <name evidence="5" type="ordered locus">LOC_Os11g19840</name>
</gene>
<protein>
    <recommendedName>
        <fullName evidence="4">Flavonoid O-methyltransferase-like protein Os11g0303600</fullName>
        <ecNumber evidence="4">2.1.1.-</ecNumber>
    </recommendedName>
</protein>
<dbReference type="EC" id="2.1.1.-" evidence="4"/>
<dbReference type="EMBL" id="AC112208">
    <property type="protein sequence ID" value="AAX94931.1"/>
    <property type="molecule type" value="Genomic_DNA"/>
</dbReference>
<dbReference type="EMBL" id="DP000010">
    <property type="protein sequence ID" value="ABA92996.1"/>
    <property type="molecule type" value="Genomic_DNA"/>
</dbReference>
<dbReference type="EMBL" id="AP008217">
    <property type="protein sequence ID" value="BAF28105.1"/>
    <property type="molecule type" value="Genomic_DNA"/>
</dbReference>
<dbReference type="EMBL" id="AP014967">
    <property type="protein sequence ID" value="BAT13701.1"/>
    <property type="molecule type" value="Genomic_DNA"/>
</dbReference>
<dbReference type="EMBL" id="AK061247">
    <property type="protein sequence ID" value="BAG87815.1"/>
    <property type="molecule type" value="mRNA"/>
</dbReference>
<dbReference type="SMR" id="Q53QK0"/>
<dbReference type="FunCoup" id="Q53QK0">
    <property type="interactions" value="198"/>
</dbReference>
<dbReference type="STRING" id="39947.Q53QK0"/>
<dbReference type="PaxDb" id="39947-Q53QK0"/>
<dbReference type="EnsemblPlants" id="Os11t0303600-01">
    <property type="protein sequence ID" value="Os11t0303600-01"/>
    <property type="gene ID" value="Os11g0303600"/>
</dbReference>
<dbReference type="Gramene" id="Os11t0303600-01">
    <property type="protein sequence ID" value="Os11t0303600-01"/>
    <property type="gene ID" value="Os11g0303600"/>
</dbReference>
<dbReference type="KEGG" id="dosa:Os11g0303600"/>
<dbReference type="eggNOG" id="KOG3178">
    <property type="taxonomic scope" value="Eukaryota"/>
</dbReference>
<dbReference type="HOGENOM" id="CLU_005533_7_0_1"/>
<dbReference type="InParanoid" id="Q53QK0"/>
<dbReference type="OMA" id="AMGLAEW"/>
<dbReference type="OrthoDB" id="2410195at2759"/>
<dbReference type="Proteomes" id="UP000000763">
    <property type="component" value="Chromosome 11"/>
</dbReference>
<dbReference type="Proteomes" id="UP000059680">
    <property type="component" value="Chromosome 11"/>
</dbReference>
<dbReference type="GO" id="GO:0008171">
    <property type="term" value="F:O-methyltransferase activity"/>
    <property type="evidence" value="ECO:0000318"/>
    <property type="project" value="GO_Central"/>
</dbReference>
<dbReference type="GO" id="GO:0046983">
    <property type="term" value="F:protein dimerization activity"/>
    <property type="evidence" value="ECO:0007669"/>
    <property type="project" value="InterPro"/>
</dbReference>
<dbReference type="GO" id="GO:0008757">
    <property type="term" value="F:S-adenosylmethionine-dependent methyltransferase activity"/>
    <property type="evidence" value="ECO:0000318"/>
    <property type="project" value="GO_Central"/>
</dbReference>
<dbReference type="GO" id="GO:0009058">
    <property type="term" value="P:biosynthetic process"/>
    <property type="evidence" value="ECO:0000318"/>
    <property type="project" value="GO_Central"/>
</dbReference>
<dbReference type="GO" id="GO:0032259">
    <property type="term" value="P:methylation"/>
    <property type="evidence" value="ECO:0000318"/>
    <property type="project" value="GO_Central"/>
</dbReference>
<dbReference type="FunFam" id="1.10.10.10:FF:000213">
    <property type="entry name" value="Coniferyl alcohol 9-O-methyltransferase"/>
    <property type="match status" value="1"/>
</dbReference>
<dbReference type="FunFam" id="3.40.50.150:FF:000185">
    <property type="entry name" value="O-methyltransferase family protein"/>
    <property type="match status" value="1"/>
</dbReference>
<dbReference type="Gene3D" id="3.40.50.150">
    <property type="entry name" value="Vaccinia Virus protein VP39"/>
    <property type="match status" value="1"/>
</dbReference>
<dbReference type="Gene3D" id="1.10.10.10">
    <property type="entry name" value="Winged helix-like DNA-binding domain superfamily/Winged helix DNA-binding domain"/>
    <property type="match status" value="1"/>
</dbReference>
<dbReference type="InterPro" id="IPR016461">
    <property type="entry name" value="COMT-like"/>
</dbReference>
<dbReference type="InterPro" id="IPR001077">
    <property type="entry name" value="O_MeTrfase_dom"/>
</dbReference>
<dbReference type="InterPro" id="IPR012967">
    <property type="entry name" value="Plant_O-MeTrfase_dimerisation"/>
</dbReference>
<dbReference type="InterPro" id="IPR029063">
    <property type="entry name" value="SAM-dependent_MTases_sf"/>
</dbReference>
<dbReference type="InterPro" id="IPR036388">
    <property type="entry name" value="WH-like_DNA-bd_sf"/>
</dbReference>
<dbReference type="InterPro" id="IPR036390">
    <property type="entry name" value="WH_DNA-bd_sf"/>
</dbReference>
<dbReference type="PANTHER" id="PTHR11746">
    <property type="entry name" value="O-METHYLTRANSFERASE"/>
    <property type="match status" value="1"/>
</dbReference>
<dbReference type="Pfam" id="PF08100">
    <property type="entry name" value="Dimerisation"/>
    <property type="match status" value="1"/>
</dbReference>
<dbReference type="Pfam" id="PF00891">
    <property type="entry name" value="Methyltransf_2"/>
    <property type="match status" value="1"/>
</dbReference>
<dbReference type="PIRSF" id="PIRSF005739">
    <property type="entry name" value="O-mtase"/>
    <property type="match status" value="1"/>
</dbReference>
<dbReference type="SUPFAM" id="SSF53335">
    <property type="entry name" value="S-adenosyl-L-methionine-dependent methyltransferases"/>
    <property type="match status" value="1"/>
</dbReference>
<dbReference type="SUPFAM" id="SSF46785">
    <property type="entry name" value="Winged helix' DNA-binding domain"/>
    <property type="match status" value="1"/>
</dbReference>
<dbReference type="PROSITE" id="PS51683">
    <property type="entry name" value="SAM_OMT_II"/>
    <property type="match status" value="1"/>
</dbReference>
<reference key="1">
    <citation type="journal article" date="2005" name="BMC Biol.">
        <title>The sequence of rice chromosomes 11 and 12, rich in disease resistance genes and recent gene duplications.</title>
        <authorList>
            <consortium name="The rice chromosomes 11 and 12 sequencing consortia"/>
        </authorList>
    </citation>
    <scope>NUCLEOTIDE SEQUENCE [LARGE SCALE GENOMIC DNA]</scope>
    <source>
        <strain>cv. Nipponbare</strain>
    </source>
</reference>
<reference key="2">
    <citation type="journal article" date="2005" name="Nature">
        <title>The map-based sequence of the rice genome.</title>
        <authorList>
            <consortium name="International rice genome sequencing project (IRGSP)"/>
        </authorList>
    </citation>
    <scope>NUCLEOTIDE SEQUENCE [LARGE SCALE GENOMIC DNA]</scope>
    <source>
        <strain>cv. Nipponbare</strain>
    </source>
</reference>
<reference key="3">
    <citation type="journal article" date="2008" name="Nucleic Acids Res.">
        <title>The rice annotation project database (RAP-DB): 2008 update.</title>
        <authorList>
            <consortium name="The rice annotation project (RAP)"/>
        </authorList>
    </citation>
    <scope>GENOME REANNOTATION</scope>
    <source>
        <strain>cv. Nipponbare</strain>
    </source>
</reference>
<reference key="4">
    <citation type="journal article" date="2013" name="Rice">
        <title>Improvement of the Oryza sativa Nipponbare reference genome using next generation sequence and optical map data.</title>
        <authorList>
            <person name="Kawahara Y."/>
            <person name="de la Bastide M."/>
            <person name="Hamilton J.P."/>
            <person name="Kanamori H."/>
            <person name="McCombie W.R."/>
            <person name="Ouyang S."/>
            <person name="Schwartz D.C."/>
            <person name="Tanaka T."/>
            <person name="Wu J."/>
            <person name="Zhou S."/>
            <person name="Childs K.L."/>
            <person name="Davidson R.M."/>
            <person name="Lin H."/>
            <person name="Quesada-Ocampo L."/>
            <person name="Vaillancourt B."/>
            <person name="Sakai H."/>
            <person name="Lee S.S."/>
            <person name="Kim J."/>
            <person name="Numa H."/>
            <person name="Itoh T."/>
            <person name="Buell C.R."/>
            <person name="Matsumoto T."/>
        </authorList>
    </citation>
    <scope>GENOME REANNOTATION</scope>
    <source>
        <strain>cv. Nipponbare</strain>
    </source>
</reference>
<reference key="5">
    <citation type="journal article" date="2003" name="Science">
        <title>Collection, mapping, and annotation of over 28,000 cDNA clones from japonica rice.</title>
        <authorList>
            <consortium name="The rice full-length cDNA consortium"/>
        </authorList>
    </citation>
    <scope>NUCLEOTIDE SEQUENCE [LARGE SCALE MRNA]</scope>
    <source>
        <strain>cv. Nipponbare</strain>
    </source>
</reference>
<reference key="6">
    <citation type="journal article" date="2013" name="Phytochemistry">
        <title>Transcriptomic analysis of UV-treated rice leaves reveals UV-induced phytoalexin biosynthetic pathways and their regulatory networks in rice.</title>
        <authorList>
            <person name="Park H.L."/>
            <person name="Lee S.W."/>
            <person name="Jung K.H."/>
            <person name="Hahn T.R."/>
            <person name="Cho M.H."/>
        </authorList>
    </citation>
    <scope>INDUCTION BY UV-C</scope>
</reference>
<name>Y1103_ORYSJ</name>
<feature type="chain" id="PRO_0000437952" description="Flavonoid O-methyltransferase-like protein Os11g0303600">
    <location>
        <begin position="1"/>
        <end position="374"/>
    </location>
</feature>
<feature type="active site" description="Proton acceptor" evidence="2">
    <location>
        <position position="280"/>
    </location>
</feature>
<feature type="binding site" evidence="1">
    <location>
        <position position="242"/>
    </location>
    <ligand>
        <name>S-adenosyl-L-homocysteine</name>
        <dbReference type="ChEBI" id="CHEBI:57856"/>
    </ligand>
</feature>
<feature type="binding site" evidence="1">
    <location>
        <position position="262"/>
    </location>
    <ligand>
        <name>S-adenosyl-L-homocysteine</name>
        <dbReference type="ChEBI" id="CHEBI:57856"/>
    </ligand>
</feature>
<feature type="binding site" evidence="1">
    <location>
        <position position="263"/>
    </location>
    <ligand>
        <name>S-adenosyl-L-homocysteine</name>
        <dbReference type="ChEBI" id="CHEBI:57856"/>
    </ligand>
</feature>
<feature type="binding site" evidence="1">
    <location>
        <position position="276"/>
    </location>
    <ligand>
        <name>S-adenosyl-L-homocysteine</name>
        <dbReference type="ChEBI" id="CHEBI:57856"/>
    </ligand>
</feature>
<accession>Q53QK0</accession>
<evidence type="ECO:0000250" key="1">
    <source>
        <dbReference type="UniProtKB" id="P28002"/>
    </source>
</evidence>
<evidence type="ECO:0000255" key="2">
    <source>
        <dbReference type="PROSITE-ProRule" id="PRU01020"/>
    </source>
</evidence>
<evidence type="ECO:0000269" key="3">
    <source>
    </source>
</evidence>
<evidence type="ECO:0000305" key="4"/>
<evidence type="ECO:0000312" key="5">
    <source>
        <dbReference type="EMBL" id="AAX94931.1"/>
    </source>
</evidence>
<evidence type="ECO:0000312" key="6">
    <source>
        <dbReference type="EMBL" id="BAF28105.1"/>
    </source>
</evidence>
<keyword id="KW-0489">Methyltransferase</keyword>
<keyword id="KW-1185">Reference proteome</keyword>
<keyword id="KW-0949">S-adenosyl-L-methionine</keyword>
<keyword id="KW-0808">Transferase</keyword>